<comment type="similarity">
    <text evidence="1">Belongs to the HesB/IscA family.</text>
</comment>
<keyword id="KW-0535">Nitrogen fixation</keyword>
<proteinExistence type="inferred from homology"/>
<gene>
    <name type="primary">hesB</name>
</gene>
<name>HESB_LEPBY</name>
<protein>
    <recommendedName>
        <fullName>Protein HesB</fullName>
    </recommendedName>
</protein>
<accession>P46053</accession>
<evidence type="ECO:0000305" key="1"/>
<feature type="chain" id="PRO_0000076986" description="Protein HesB">
    <location>
        <begin position="1"/>
        <end position="121"/>
    </location>
</feature>
<sequence>MTVTLTERAELRLRAFLQGTANPTDTKGIRVGVSDGGCSGYQYTLDIANEPKPDDVIEQQGRVKIYIDPQAAALINGVVVDFVEGLMDSGFKFSNPNATDTCGCGQSFQAGDCTPAAVPCS</sequence>
<reference key="1">
    <citation type="journal article" date="1994" name="J. Bacteriol.">
        <title>Characterization of the genome region encoding an fdxH-type ferredoxin and a new 2[4Fe-4S] ferredoxin from the nonheterocystous, nitrogen-fixing cyanobacterium Plectonema boryanum PCC 73110.</title>
        <authorList>
            <person name="Schrautemeier B."/>
            <person name="Cassing A."/>
            <person name="Boehme H."/>
        </authorList>
    </citation>
    <scope>NUCLEOTIDE SEQUENCE [GENOMIC DNA]</scope>
    <source>
        <strain>ATCC 18200 / UTEX 594 / PCC 73110</strain>
    </source>
</reference>
<organism>
    <name type="scientific">Leptolyngbya boryana</name>
    <name type="common">Plectonema boryanum</name>
    <dbReference type="NCBI Taxonomy" id="1184"/>
    <lineage>
        <taxon>Bacteria</taxon>
        <taxon>Bacillati</taxon>
        <taxon>Cyanobacteriota</taxon>
        <taxon>Cyanophyceae</taxon>
        <taxon>Leptolyngbyales</taxon>
        <taxon>Leptolyngbyaceae</taxon>
        <taxon>Leptolyngbya group</taxon>
        <taxon>Leptolyngbya</taxon>
    </lineage>
</organism>
<dbReference type="EMBL" id="X71865">
    <property type="protein sequence ID" value="CAA50697.1"/>
    <property type="molecule type" value="Genomic_DNA"/>
</dbReference>
<dbReference type="PIR" id="B49890">
    <property type="entry name" value="B49890"/>
</dbReference>
<dbReference type="SMR" id="P46053"/>
<dbReference type="GO" id="GO:0005829">
    <property type="term" value="C:cytosol"/>
    <property type="evidence" value="ECO:0007669"/>
    <property type="project" value="TreeGrafter"/>
</dbReference>
<dbReference type="GO" id="GO:0051537">
    <property type="term" value="F:2 iron, 2 sulfur cluster binding"/>
    <property type="evidence" value="ECO:0007669"/>
    <property type="project" value="TreeGrafter"/>
</dbReference>
<dbReference type="GO" id="GO:0016226">
    <property type="term" value="P:iron-sulfur cluster assembly"/>
    <property type="evidence" value="ECO:0007669"/>
    <property type="project" value="InterPro"/>
</dbReference>
<dbReference type="GO" id="GO:0009399">
    <property type="term" value="P:nitrogen fixation"/>
    <property type="evidence" value="ECO:0007669"/>
    <property type="project" value="UniProtKB-KW"/>
</dbReference>
<dbReference type="Gene3D" id="2.60.300.12">
    <property type="entry name" value="HesB-like domain"/>
    <property type="match status" value="1"/>
</dbReference>
<dbReference type="InterPro" id="IPR050322">
    <property type="entry name" value="Fe-S_cluster_asmbl/transfer"/>
</dbReference>
<dbReference type="InterPro" id="IPR000361">
    <property type="entry name" value="FeS_biogenesis"/>
</dbReference>
<dbReference type="InterPro" id="IPR016092">
    <property type="entry name" value="FeS_cluster_insertion"/>
</dbReference>
<dbReference type="InterPro" id="IPR017870">
    <property type="entry name" value="FeS_cluster_insertion_CS"/>
</dbReference>
<dbReference type="InterPro" id="IPR035903">
    <property type="entry name" value="HesB-like_dom_sf"/>
</dbReference>
<dbReference type="NCBIfam" id="TIGR00049">
    <property type="entry name" value="iron-sulfur cluster assembly accessory protein"/>
    <property type="match status" value="1"/>
</dbReference>
<dbReference type="PANTHER" id="PTHR10072:SF41">
    <property type="entry name" value="IRON-SULFUR CLUSTER ASSEMBLY 1 HOMOLOG, MITOCHONDRIAL"/>
    <property type="match status" value="1"/>
</dbReference>
<dbReference type="PANTHER" id="PTHR10072">
    <property type="entry name" value="IRON-SULFUR CLUSTER ASSEMBLY PROTEIN"/>
    <property type="match status" value="1"/>
</dbReference>
<dbReference type="Pfam" id="PF01521">
    <property type="entry name" value="Fe-S_biosyn"/>
    <property type="match status" value="1"/>
</dbReference>
<dbReference type="SUPFAM" id="SSF89360">
    <property type="entry name" value="HesB-like domain"/>
    <property type="match status" value="1"/>
</dbReference>
<dbReference type="PROSITE" id="PS01152">
    <property type="entry name" value="HESB"/>
    <property type="match status" value="1"/>
</dbReference>